<proteinExistence type="inferred from homology"/>
<organism>
    <name type="scientific">Escherichia coli O45:K1 (strain S88 / ExPEC)</name>
    <dbReference type="NCBI Taxonomy" id="585035"/>
    <lineage>
        <taxon>Bacteria</taxon>
        <taxon>Pseudomonadati</taxon>
        <taxon>Pseudomonadota</taxon>
        <taxon>Gammaproteobacteria</taxon>
        <taxon>Enterobacterales</taxon>
        <taxon>Enterobacteriaceae</taxon>
        <taxon>Escherichia</taxon>
    </lineage>
</organism>
<protein>
    <recommendedName>
        <fullName evidence="1">Protein TusC</fullName>
    </recommendedName>
    <alternativeName>
        <fullName evidence="1">tRNA 2-thiouridine synthesizing protein C</fullName>
    </alternativeName>
</protein>
<sequence length="119" mass="13073">MKRIAFVFSTVPHGTAAGREGLDALLATSALTDDLAVFFIADGVFQLLPGQKPDAVLARDYIATFKLLGLYDIEQCWVCAASLRERGLDPQTPFVVEATPLEADALRRELANYDVILRF</sequence>
<dbReference type="EMBL" id="CU928161">
    <property type="protein sequence ID" value="CAR04948.1"/>
    <property type="molecule type" value="Genomic_DNA"/>
</dbReference>
<dbReference type="RefSeq" id="WP_000820734.1">
    <property type="nucleotide sequence ID" value="NC_011742.1"/>
</dbReference>
<dbReference type="SMR" id="B7MCV9"/>
<dbReference type="KEGG" id="ecz:ECS88_3732"/>
<dbReference type="HOGENOM" id="CLU_155943_1_0_6"/>
<dbReference type="Proteomes" id="UP000000747">
    <property type="component" value="Chromosome"/>
</dbReference>
<dbReference type="GO" id="GO:0005737">
    <property type="term" value="C:cytoplasm"/>
    <property type="evidence" value="ECO:0007669"/>
    <property type="project" value="UniProtKB-SubCell"/>
</dbReference>
<dbReference type="GO" id="GO:0008033">
    <property type="term" value="P:tRNA processing"/>
    <property type="evidence" value="ECO:0007669"/>
    <property type="project" value="UniProtKB-UniRule"/>
</dbReference>
<dbReference type="FunFam" id="3.40.1260.10:FF:000004">
    <property type="entry name" value="Sulfurtransferase TusC"/>
    <property type="match status" value="1"/>
</dbReference>
<dbReference type="Gene3D" id="3.40.1260.10">
    <property type="entry name" value="DsrEFH-like"/>
    <property type="match status" value="1"/>
</dbReference>
<dbReference type="HAMAP" id="MF_00389">
    <property type="entry name" value="Thiourid_synth_C"/>
    <property type="match status" value="1"/>
</dbReference>
<dbReference type="InterPro" id="IPR027396">
    <property type="entry name" value="DsrEFH-like"/>
</dbReference>
<dbReference type="InterPro" id="IPR003787">
    <property type="entry name" value="Sulphur_relay_DsrE/F-like"/>
</dbReference>
<dbReference type="InterPro" id="IPR037450">
    <property type="entry name" value="Sulphur_relay_TusC"/>
</dbReference>
<dbReference type="InterPro" id="IPR017462">
    <property type="entry name" value="Sulphur_relay_TusC/DsrF"/>
</dbReference>
<dbReference type="NCBIfam" id="NF001238">
    <property type="entry name" value="PRK00211.1"/>
    <property type="match status" value="1"/>
</dbReference>
<dbReference type="NCBIfam" id="TIGR03010">
    <property type="entry name" value="sulf_tusC_dsrF"/>
    <property type="match status" value="1"/>
</dbReference>
<dbReference type="PANTHER" id="PTHR38780">
    <property type="entry name" value="PROTEIN TUSC"/>
    <property type="match status" value="1"/>
</dbReference>
<dbReference type="PANTHER" id="PTHR38780:SF1">
    <property type="entry name" value="PROTEIN TUSC"/>
    <property type="match status" value="1"/>
</dbReference>
<dbReference type="Pfam" id="PF02635">
    <property type="entry name" value="DsrE"/>
    <property type="match status" value="1"/>
</dbReference>
<dbReference type="SUPFAM" id="SSF75169">
    <property type="entry name" value="DsrEFH-like"/>
    <property type="match status" value="1"/>
</dbReference>
<gene>
    <name evidence="1" type="primary">tusC</name>
    <name type="ordered locus">ECS88_3732</name>
</gene>
<reference key="1">
    <citation type="journal article" date="2009" name="PLoS Genet.">
        <title>Organised genome dynamics in the Escherichia coli species results in highly diverse adaptive paths.</title>
        <authorList>
            <person name="Touchon M."/>
            <person name="Hoede C."/>
            <person name="Tenaillon O."/>
            <person name="Barbe V."/>
            <person name="Baeriswyl S."/>
            <person name="Bidet P."/>
            <person name="Bingen E."/>
            <person name="Bonacorsi S."/>
            <person name="Bouchier C."/>
            <person name="Bouvet O."/>
            <person name="Calteau A."/>
            <person name="Chiapello H."/>
            <person name="Clermont O."/>
            <person name="Cruveiller S."/>
            <person name="Danchin A."/>
            <person name="Diard M."/>
            <person name="Dossat C."/>
            <person name="Karoui M.E."/>
            <person name="Frapy E."/>
            <person name="Garry L."/>
            <person name="Ghigo J.M."/>
            <person name="Gilles A.M."/>
            <person name="Johnson J."/>
            <person name="Le Bouguenec C."/>
            <person name="Lescat M."/>
            <person name="Mangenot S."/>
            <person name="Martinez-Jehanne V."/>
            <person name="Matic I."/>
            <person name="Nassif X."/>
            <person name="Oztas S."/>
            <person name="Petit M.A."/>
            <person name="Pichon C."/>
            <person name="Rouy Z."/>
            <person name="Ruf C.S."/>
            <person name="Schneider D."/>
            <person name="Tourret J."/>
            <person name="Vacherie B."/>
            <person name="Vallenet D."/>
            <person name="Medigue C."/>
            <person name="Rocha E.P.C."/>
            <person name="Denamur E."/>
        </authorList>
    </citation>
    <scope>NUCLEOTIDE SEQUENCE [LARGE SCALE GENOMIC DNA]</scope>
    <source>
        <strain>S88 / ExPEC</strain>
    </source>
</reference>
<evidence type="ECO:0000255" key="1">
    <source>
        <dbReference type="HAMAP-Rule" id="MF_00389"/>
    </source>
</evidence>
<feature type="chain" id="PRO_1000122834" description="Protein TusC">
    <location>
        <begin position="1"/>
        <end position="119"/>
    </location>
</feature>
<accession>B7MCV9</accession>
<comment type="function">
    <text evidence="1">Part of a sulfur-relay system required for 2-thiolation of 5-methylaminomethyl-2-thiouridine (mnm(5)s(2)U) at tRNA wobble positions.</text>
</comment>
<comment type="subunit">
    <text evidence="1">Heterohexamer, formed by a dimer of trimers. The hexameric TusBCD complex contains 2 copies each of TusB, TusC and TusD. The TusBCD complex interacts with TusE.</text>
</comment>
<comment type="subcellular location">
    <subcellularLocation>
        <location evidence="1">Cytoplasm</location>
    </subcellularLocation>
</comment>
<comment type="similarity">
    <text evidence="1">Belongs to the DsrF/TusC family.</text>
</comment>
<name>TUSC_ECO45</name>
<keyword id="KW-0963">Cytoplasm</keyword>
<keyword id="KW-1185">Reference proteome</keyword>
<keyword id="KW-0819">tRNA processing</keyword>